<gene>
    <name type="ordered locus">At3g59250</name>
    <name type="ORF">F25L23.110</name>
</gene>
<evidence type="ECO:0000255" key="1">
    <source>
        <dbReference type="PROSITE-ProRule" id="PRU00080"/>
    </source>
</evidence>
<feature type="chain" id="PRO_0000281968" description="F-box/LRR-repeat protein At3g59250">
    <location>
        <begin position="1"/>
        <end position="425"/>
    </location>
</feature>
<feature type="domain" description="F-box" evidence="1">
    <location>
        <begin position="6"/>
        <end position="54"/>
    </location>
</feature>
<feature type="repeat" description="LRR 1">
    <location>
        <begin position="86"/>
        <end position="113"/>
    </location>
</feature>
<feature type="repeat" description="LRR 2">
    <location>
        <begin position="138"/>
        <end position="163"/>
    </location>
</feature>
<feature type="repeat" description="LRR 3">
    <location>
        <begin position="185"/>
        <end position="210"/>
    </location>
</feature>
<feature type="repeat" description="LRR 4">
    <location>
        <begin position="264"/>
        <end position="293"/>
    </location>
</feature>
<feature type="repeat" description="LRR 5">
    <location>
        <begin position="294"/>
        <end position="319"/>
    </location>
</feature>
<dbReference type="EMBL" id="AL356014">
    <property type="protein sequence ID" value="CAB91595.1"/>
    <property type="molecule type" value="Genomic_DNA"/>
</dbReference>
<dbReference type="EMBL" id="CP002686">
    <property type="protein sequence ID" value="AEE79896.1"/>
    <property type="molecule type" value="Genomic_DNA"/>
</dbReference>
<dbReference type="PIR" id="T48993">
    <property type="entry name" value="T48993"/>
</dbReference>
<dbReference type="RefSeq" id="NP_191484.1">
    <property type="nucleotide sequence ID" value="NM_115787.2"/>
</dbReference>
<dbReference type="BioGRID" id="10409">
    <property type="interactions" value="3"/>
</dbReference>
<dbReference type="FunCoup" id="Q9LX46">
    <property type="interactions" value="95"/>
</dbReference>
<dbReference type="STRING" id="3702.Q9LX46"/>
<dbReference type="PaxDb" id="3702-AT3G59250.1"/>
<dbReference type="EnsemblPlants" id="AT3G59250.1">
    <property type="protein sequence ID" value="AT3G59250.1"/>
    <property type="gene ID" value="AT3G59250"/>
</dbReference>
<dbReference type="GeneID" id="825094"/>
<dbReference type="Gramene" id="AT3G59250.1">
    <property type="protein sequence ID" value="AT3G59250.1"/>
    <property type="gene ID" value="AT3G59250"/>
</dbReference>
<dbReference type="KEGG" id="ath:AT3G59250"/>
<dbReference type="Araport" id="AT3G59250"/>
<dbReference type="TAIR" id="AT3G59250"/>
<dbReference type="HOGENOM" id="CLU_010721_7_4_1"/>
<dbReference type="InParanoid" id="Q9LX46"/>
<dbReference type="OMA" id="NKVMLGN"/>
<dbReference type="PhylomeDB" id="Q9LX46"/>
<dbReference type="PRO" id="PR:Q9LX46"/>
<dbReference type="Proteomes" id="UP000006548">
    <property type="component" value="Chromosome 3"/>
</dbReference>
<dbReference type="ExpressionAtlas" id="Q9LX46">
    <property type="expression patterns" value="baseline and differential"/>
</dbReference>
<dbReference type="CDD" id="cd22160">
    <property type="entry name" value="F-box_AtFBL13-like"/>
    <property type="match status" value="1"/>
</dbReference>
<dbReference type="Gene3D" id="1.20.1280.50">
    <property type="match status" value="1"/>
</dbReference>
<dbReference type="Gene3D" id="3.80.10.10">
    <property type="entry name" value="Ribonuclease Inhibitor"/>
    <property type="match status" value="1"/>
</dbReference>
<dbReference type="InterPro" id="IPR036047">
    <property type="entry name" value="F-box-like_dom_sf"/>
</dbReference>
<dbReference type="InterPro" id="IPR053781">
    <property type="entry name" value="F-box_AtFBL13-like"/>
</dbReference>
<dbReference type="InterPro" id="IPR001810">
    <property type="entry name" value="F-box_dom"/>
</dbReference>
<dbReference type="InterPro" id="IPR006566">
    <property type="entry name" value="FBD"/>
</dbReference>
<dbReference type="InterPro" id="IPR055294">
    <property type="entry name" value="FBL60-like"/>
</dbReference>
<dbReference type="InterPro" id="IPR032675">
    <property type="entry name" value="LRR_dom_sf"/>
</dbReference>
<dbReference type="InterPro" id="IPR055411">
    <property type="entry name" value="LRR_FXL15/At3g58940/PEG3-like"/>
</dbReference>
<dbReference type="PANTHER" id="PTHR31293">
    <property type="entry name" value="RNI-LIKE SUPERFAMILY PROTEIN"/>
    <property type="match status" value="1"/>
</dbReference>
<dbReference type="PANTHER" id="PTHR31293:SF16">
    <property type="entry name" value="RNI-LIKE SUPERFAMILY PROTEIN"/>
    <property type="match status" value="1"/>
</dbReference>
<dbReference type="Pfam" id="PF00646">
    <property type="entry name" value="F-box"/>
    <property type="match status" value="1"/>
</dbReference>
<dbReference type="Pfam" id="PF24758">
    <property type="entry name" value="LRR_At5g56370"/>
    <property type="match status" value="1"/>
</dbReference>
<dbReference type="SMART" id="SM00579">
    <property type="entry name" value="FBD"/>
    <property type="match status" value="1"/>
</dbReference>
<dbReference type="SUPFAM" id="SSF81383">
    <property type="entry name" value="F-box domain"/>
    <property type="match status" value="1"/>
</dbReference>
<dbReference type="SUPFAM" id="SSF52047">
    <property type="entry name" value="RNI-like"/>
    <property type="match status" value="1"/>
</dbReference>
<dbReference type="PROSITE" id="PS50181">
    <property type="entry name" value="FBOX"/>
    <property type="match status" value="1"/>
</dbReference>
<name>FBL68_ARATH</name>
<organism>
    <name type="scientific">Arabidopsis thaliana</name>
    <name type="common">Mouse-ear cress</name>
    <dbReference type="NCBI Taxonomy" id="3702"/>
    <lineage>
        <taxon>Eukaryota</taxon>
        <taxon>Viridiplantae</taxon>
        <taxon>Streptophyta</taxon>
        <taxon>Embryophyta</taxon>
        <taxon>Tracheophyta</taxon>
        <taxon>Spermatophyta</taxon>
        <taxon>Magnoliopsida</taxon>
        <taxon>eudicotyledons</taxon>
        <taxon>Gunneridae</taxon>
        <taxon>Pentapetalae</taxon>
        <taxon>rosids</taxon>
        <taxon>malvids</taxon>
        <taxon>Brassicales</taxon>
        <taxon>Brassicaceae</taxon>
        <taxon>Camelineae</taxon>
        <taxon>Arabidopsis</taxon>
    </lineage>
</organism>
<reference key="1">
    <citation type="journal article" date="2000" name="Nature">
        <title>Sequence and analysis of chromosome 3 of the plant Arabidopsis thaliana.</title>
        <authorList>
            <person name="Salanoubat M."/>
            <person name="Lemcke K."/>
            <person name="Rieger M."/>
            <person name="Ansorge W."/>
            <person name="Unseld M."/>
            <person name="Fartmann B."/>
            <person name="Valle G."/>
            <person name="Bloecker H."/>
            <person name="Perez-Alonso M."/>
            <person name="Obermaier B."/>
            <person name="Delseny M."/>
            <person name="Boutry M."/>
            <person name="Grivell L.A."/>
            <person name="Mache R."/>
            <person name="Puigdomenech P."/>
            <person name="De Simone V."/>
            <person name="Choisne N."/>
            <person name="Artiguenave F."/>
            <person name="Robert C."/>
            <person name="Brottier P."/>
            <person name="Wincker P."/>
            <person name="Cattolico L."/>
            <person name="Weissenbach J."/>
            <person name="Saurin W."/>
            <person name="Quetier F."/>
            <person name="Schaefer M."/>
            <person name="Mueller-Auer S."/>
            <person name="Gabel C."/>
            <person name="Fuchs M."/>
            <person name="Benes V."/>
            <person name="Wurmbach E."/>
            <person name="Drzonek H."/>
            <person name="Erfle H."/>
            <person name="Jordan N."/>
            <person name="Bangert S."/>
            <person name="Wiedelmann R."/>
            <person name="Kranz H."/>
            <person name="Voss H."/>
            <person name="Holland R."/>
            <person name="Brandt P."/>
            <person name="Nyakatura G."/>
            <person name="Vezzi A."/>
            <person name="D'Angelo M."/>
            <person name="Pallavicini A."/>
            <person name="Toppo S."/>
            <person name="Simionati B."/>
            <person name="Conrad A."/>
            <person name="Hornischer K."/>
            <person name="Kauer G."/>
            <person name="Loehnert T.-H."/>
            <person name="Nordsiek G."/>
            <person name="Reichelt J."/>
            <person name="Scharfe M."/>
            <person name="Schoen O."/>
            <person name="Bargues M."/>
            <person name="Terol J."/>
            <person name="Climent J."/>
            <person name="Navarro P."/>
            <person name="Collado C."/>
            <person name="Perez-Perez A."/>
            <person name="Ottenwaelder B."/>
            <person name="Duchemin D."/>
            <person name="Cooke R."/>
            <person name="Laudie M."/>
            <person name="Berger-Llauro C."/>
            <person name="Purnelle B."/>
            <person name="Masuy D."/>
            <person name="de Haan M."/>
            <person name="Maarse A.C."/>
            <person name="Alcaraz J.-P."/>
            <person name="Cottet A."/>
            <person name="Casacuberta E."/>
            <person name="Monfort A."/>
            <person name="Argiriou A."/>
            <person name="Flores M."/>
            <person name="Liguori R."/>
            <person name="Vitale D."/>
            <person name="Mannhaupt G."/>
            <person name="Haase D."/>
            <person name="Schoof H."/>
            <person name="Rudd S."/>
            <person name="Zaccaria P."/>
            <person name="Mewes H.-W."/>
            <person name="Mayer K.F.X."/>
            <person name="Kaul S."/>
            <person name="Town C.D."/>
            <person name="Koo H.L."/>
            <person name="Tallon L.J."/>
            <person name="Jenkins J."/>
            <person name="Rooney T."/>
            <person name="Rizzo M."/>
            <person name="Walts A."/>
            <person name="Utterback T."/>
            <person name="Fujii C.Y."/>
            <person name="Shea T.P."/>
            <person name="Creasy T.H."/>
            <person name="Haas B."/>
            <person name="Maiti R."/>
            <person name="Wu D."/>
            <person name="Peterson J."/>
            <person name="Van Aken S."/>
            <person name="Pai G."/>
            <person name="Militscher J."/>
            <person name="Sellers P."/>
            <person name="Gill J.E."/>
            <person name="Feldblyum T.V."/>
            <person name="Preuss D."/>
            <person name="Lin X."/>
            <person name="Nierman W.C."/>
            <person name="Salzberg S.L."/>
            <person name="White O."/>
            <person name="Venter J.C."/>
            <person name="Fraser C.M."/>
            <person name="Kaneko T."/>
            <person name="Nakamura Y."/>
            <person name="Sato S."/>
            <person name="Kato T."/>
            <person name="Asamizu E."/>
            <person name="Sasamoto S."/>
            <person name="Kimura T."/>
            <person name="Idesawa K."/>
            <person name="Kawashima K."/>
            <person name="Kishida Y."/>
            <person name="Kiyokawa C."/>
            <person name="Kohara M."/>
            <person name="Matsumoto M."/>
            <person name="Matsuno A."/>
            <person name="Muraki A."/>
            <person name="Nakayama S."/>
            <person name="Nakazaki N."/>
            <person name="Shinpo S."/>
            <person name="Takeuchi C."/>
            <person name="Wada T."/>
            <person name="Watanabe A."/>
            <person name="Yamada M."/>
            <person name="Yasuda M."/>
            <person name="Tabata S."/>
        </authorList>
    </citation>
    <scope>NUCLEOTIDE SEQUENCE [LARGE SCALE GENOMIC DNA]</scope>
    <source>
        <strain>cv. Columbia</strain>
    </source>
</reference>
<reference key="2">
    <citation type="journal article" date="2017" name="Plant J.">
        <title>Araport11: a complete reannotation of the Arabidopsis thaliana reference genome.</title>
        <authorList>
            <person name="Cheng C.Y."/>
            <person name="Krishnakumar V."/>
            <person name="Chan A.P."/>
            <person name="Thibaud-Nissen F."/>
            <person name="Schobel S."/>
            <person name="Town C.D."/>
        </authorList>
    </citation>
    <scope>GENOME REANNOTATION</scope>
    <source>
        <strain>cv. Columbia</strain>
    </source>
</reference>
<keyword id="KW-0433">Leucine-rich repeat</keyword>
<keyword id="KW-1185">Reference proteome</keyword>
<keyword id="KW-0677">Repeat</keyword>
<proteinExistence type="evidence at transcript level"/>
<protein>
    <recommendedName>
        <fullName>F-box/LRR-repeat protein At3g59250</fullName>
    </recommendedName>
</protein>
<accession>Q9LX46</accession>
<sequence length="425" mass="47325">MDIGPKDKISNLPEALICHILSFLPIEDSALTSVLSKRWRYLFAFRPNLVFDDSVCLRPPCGHGVIPDYVTSWILNVLERGVLDLDLQVNVNGVRLPSKVFVSKSLVRLRIESGNVRGIDVDDVFLPKLKSLYLHTIMLGKGEDCFEKLTSGCHVLEELVLNNVYSNVWNRSVSSKTLKRLTLWCTESYDKNPHSVLFDTPNLVYLKYSDYVAAKYPKVNFSSLVDATIGLAMTSDQDANASYDALVGNATDFLMGICNVQILCLSANSLAVLTFCCESIPVFNNLIQLTIKTNQSVGWESLPALLKNCPILETLVFEGLLHMYTIKCGDVDGCLCKYSGEVPSCLSSSPVKVLKILRFGEYGIVNQIEMIKIFLETMPHLEQLTVYYNTPIGGDLIEEVSSQLKNFAREASPNCEIQVIPDVLS</sequence>